<protein>
    <recommendedName>
        <fullName>Myosin-IIIa</fullName>
        <ecNumber>2.7.11.1</ecNumber>
    </recommendedName>
</protein>
<keyword id="KW-0009">Actin-binding</keyword>
<keyword id="KW-0067">ATP-binding</keyword>
<keyword id="KW-0966">Cell projection</keyword>
<keyword id="KW-0963">Cytoplasm</keyword>
<keyword id="KW-0206">Cytoskeleton</keyword>
<keyword id="KW-1009">Hearing</keyword>
<keyword id="KW-0418">Kinase</keyword>
<keyword id="KW-0505">Motor protein</keyword>
<keyword id="KW-0518">Myosin</keyword>
<keyword id="KW-0547">Nucleotide-binding</keyword>
<keyword id="KW-1185">Reference proteome</keyword>
<keyword id="KW-0677">Repeat</keyword>
<keyword id="KW-0716">Sensory transduction</keyword>
<keyword id="KW-0723">Serine/threonine-protein kinase</keyword>
<keyword id="KW-0808">Transferase</keyword>
<keyword id="KW-0844">Vision</keyword>
<evidence type="ECO:0000250" key="1">
    <source>
        <dbReference type="UniProtKB" id="Q8NEV4"/>
    </source>
</evidence>
<evidence type="ECO:0000255" key="2">
    <source>
        <dbReference type="PROSITE-ProRule" id="PRU00116"/>
    </source>
</evidence>
<evidence type="ECO:0000255" key="3">
    <source>
        <dbReference type="PROSITE-ProRule" id="PRU00159"/>
    </source>
</evidence>
<evidence type="ECO:0000255" key="4">
    <source>
        <dbReference type="PROSITE-ProRule" id="PRU00782"/>
    </source>
</evidence>
<evidence type="ECO:0000256" key="5">
    <source>
        <dbReference type="SAM" id="MobiDB-lite"/>
    </source>
</evidence>
<evidence type="ECO:0000269" key="6">
    <source>
    </source>
</evidence>
<evidence type="ECO:0000269" key="7">
    <source>
    </source>
</evidence>
<evidence type="ECO:0000269" key="8">
    <source>
    </source>
</evidence>
<evidence type="ECO:0000305" key="9"/>
<feature type="chain" id="PRO_0000086414" description="Myosin-IIIa">
    <location>
        <begin position="1"/>
        <end position="1613"/>
    </location>
</feature>
<feature type="domain" description="Protein kinase" evidence="3">
    <location>
        <begin position="21"/>
        <end position="287"/>
    </location>
</feature>
<feature type="domain" description="Myosin motor" evidence="4">
    <location>
        <begin position="338"/>
        <end position="1052"/>
    </location>
</feature>
<feature type="domain" description="IQ 1" evidence="2">
    <location>
        <begin position="1054"/>
        <end position="1083"/>
    </location>
</feature>
<feature type="domain" description="IQ 2" evidence="2">
    <location>
        <begin position="1081"/>
        <end position="1110"/>
    </location>
</feature>
<feature type="region of interest" description="Actin-binding" evidence="4">
    <location>
        <begin position="933"/>
        <end position="955"/>
    </location>
</feature>
<feature type="region of interest" description="Disordered" evidence="5">
    <location>
        <begin position="1136"/>
        <end position="1168"/>
    </location>
</feature>
<feature type="region of interest" description="Interaction with MORN4" evidence="1">
    <location>
        <begin position="1398"/>
        <end position="1476"/>
    </location>
</feature>
<feature type="region of interest" description="Disordered" evidence="5">
    <location>
        <begin position="1476"/>
        <end position="1506"/>
    </location>
</feature>
<feature type="compositionally biased region" description="Low complexity" evidence="5">
    <location>
        <begin position="1145"/>
        <end position="1161"/>
    </location>
</feature>
<feature type="compositionally biased region" description="Basic residues" evidence="5">
    <location>
        <begin position="1488"/>
        <end position="1497"/>
    </location>
</feature>
<feature type="active site" description="Proton acceptor" evidence="3">
    <location>
        <position position="150"/>
    </location>
</feature>
<feature type="binding site" evidence="3">
    <location>
        <begin position="27"/>
        <end position="35"/>
    </location>
    <ligand>
        <name>ATP</name>
        <dbReference type="ChEBI" id="CHEBI:30616"/>
    </ligand>
</feature>
<feature type="binding site" evidence="3">
    <location>
        <position position="50"/>
    </location>
    <ligand>
        <name>ATP</name>
        <dbReference type="ChEBI" id="CHEBI:30616"/>
    </ligand>
</feature>
<dbReference type="EC" id="2.7.11.1"/>
<dbReference type="EMBL" id="AY101368">
    <property type="protein sequence ID" value="AAM34501.1"/>
    <property type="molecule type" value="mRNA"/>
</dbReference>
<dbReference type="CCDS" id="CCDS84477.1"/>
<dbReference type="SMR" id="Q8K3H5"/>
<dbReference type="FunCoup" id="Q8K3H5">
    <property type="interactions" value="264"/>
</dbReference>
<dbReference type="STRING" id="10090.ENSMUSP00000046329"/>
<dbReference type="iPTMnet" id="Q8K3H5"/>
<dbReference type="PhosphoSitePlus" id="Q8K3H5"/>
<dbReference type="jPOST" id="Q8K3H5"/>
<dbReference type="PaxDb" id="10090-ENSMUSP00000046329"/>
<dbReference type="ProteomicsDB" id="287585"/>
<dbReference type="AGR" id="MGI:2183924"/>
<dbReference type="MGI" id="MGI:2183924">
    <property type="gene designation" value="Myo3a"/>
</dbReference>
<dbReference type="eggNOG" id="KOG0587">
    <property type="taxonomic scope" value="Eukaryota"/>
</dbReference>
<dbReference type="eggNOG" id="KOG4229">
    <property type="taxonomic scope" value="Eukaryota"/>
</dbReference>
<dbReference type="InParanoid" id="Q8K3H5"/>
<dbReference type="PhylomeDB" id="Q8K3H5"/>
<dbReference type="ChiTaRS" id="Myo3a">
    <property type="organism name" value="mouse"/>
</dbReference>
<dbReference type="PRO" id="PR:Q8K3H5"/>
<dbReference type="Proteomes" id="UP000000589">
    <property type="component" value="Unplaced"/>
</dbReference>
<dbReference type="RNAct" id="Q8K3H5">
    <property type="molecule type" value="protein"/>
</dbReference>
<dbReference type="GO" id="GO:0005737">
    <property type="term" value="C:cytoplasm"/>
    <property type="evidence" value="ECO:0000250"/>
    <property type="project" value="UniProtKB"/>
</dbReference>
<dbReference type="GO" id="GO:0005829">
    <property type="term" value="C:cytosol"/>
    <property type="evidence" value="ECO:0000304"/>
    <property type="project" value="Reactome"/>
</dbReference>
<dbReference type="GO" id="GO:0031941">
    <property type="term" value="C:filamentous actin"/>
    <property type="evidence" value="ECO:0000250"/>
    <property type="project" value="UniProtKB"/>
</dbReference>
<dbReference type="GO" id="GO:0030175">
    <property type="term" value="C:filopodium"/>
    <property type="evidence" value="ECO:0000250"/>
    <property type="project" value="UniProtKB"/>
</dbReference>
<dbReference type="GO" id="GO:0032433">
    <property type="term" value="C:filopodium tip"/>
    <property type="evidence" value="ECO:0000314"/>
    <property type="project" value="MGI"/>
</dbReference>
<dbReference type="GO" id="GO:0016459">
    <property type="term" value="C:myosin complex"/>
    <property type="evidence" value="ECO:0007669"/>
    <property type="project" value="UniProtKB-KW"/>
</dbReference>
<dbReference type="GO" id="GO:0001917">
    <property type="term" value="C:photoreceptor inner segment"/>
    <property type="evidence" value="ECO:0000314"/>
    <property type="project" value="MGI"/>
</dbReference>
<dbReference type="GO" id="GO:0032426">
    <property type="term" value="C:stereocilium tip"/>
    <property type="evidence" value="ECO:0000314"/>
    <property type="project" value="UniProtKB"/>
</dbReference>
<dbReference type="GO" id="GO:0051015">
    <property type="term" value="F:actin filament binding"/>
    <property type="evidence" value="ECO:0000314"/>
    <property type="project" value="MGI"/>
</dbReference>
<dbReference type="GO" id="GO:0043531">
    <property type="term" value="F:ADP binding"/>
    <property type="evidence" value="ECO:0000250"/>
    <property type="project" value="UniProtKB"/>
</dbReference>
<dbReference type="GO" id="GO:0005524">
    <property type="term" value="F:ATP binding"/>
    <property type="evidence" value="ECO:0007669"/>
    <property type="project" value="UniProtKB-KW"/>
</dbReference>
<dbReference type="GO" id="GO:0016887">
    <property type="term" value="F:ATP hydrolysis activity"/>
    <property type="evidence" value="ECO:0007669"/>
    <property type="project" value="RHEA"/>
</dbReference>
<dbReference type="GO" id="GO:0005516">
    <property type="term" value="F:calmodulin binding"/>
    <property type="evidence" value="ECO:0000250"/>
    <property type="project" value="UniProtKB"/>
</dbReference>
<dbReference type="GO" id="GO:0000146">
    <property type="term" value="F:microfilament motor activity"/>
    <property type="evidence" value="ECO:0000314"/>
    <property type="project" value="MGI"/>
</dbReference>
<dbReference type="GO" id="GO:0060002">
    <property type="term" value="F:plus-end directed microfilament motor activity"/>
    <property type="evidence" value="ECO:0000250"/>
    <property type="project" value="UniProtKB"/>
</dbReference>
<dbReference type="GO" id="GO:0004672">
    <property type="term" value="F:protein kinase activity"/>
    <property type="evidence" value="ECO:0000250"/>
    <property type="project" value="UniProtKB"/>
</dbReference>
<dbReference type="GO" id="GO:0106310">
    <property type="term" value="F:protein serine kinase activity"/>
    <property type="evidence" value="ECO:0007669"/>
    <property type="project" value="RHEA"/>
</dbReference>
<dbReference type="GO" id="GO:0004674">
    <property type="term" value="F:protein serine/threonine kinase activity"/>
    <property type="evidence" value="ECO:0000314"/>
    <property type="project" value="MGI"/>
</dbReference>
<dbReference type="GO" id="GO:0060088">
    <property type="term" value="P:auditory receptor cell stereocilium organization"/>
    <property type="evidence" value="ECO:0000315"/>
    <property type="project" value="MGI"/>
</dbReference>
<dbReference type="GO" id="GO:0090103">
    <property type="term" value="P:cochlea morphogenesis"/>
    <property type="evidence" value="ECO:0000315"/>
    <property type="project" value="UniProtKB"/>
</dbReference>
<dbReference type="GO" id="GO:0048839">
    <property type="term" value="P:inner ear development"/>
    <property type="evidence" value="ECO:0000315"/>
    <property type="project" value="MGI"/>
</dbReference>
<dbReference type="GO" id="GO:0051491">
    <property type="term" value="P:positive regulation of filopodium assembly"/>
    <property type="evidence" value="ECO:0000316"/>
    <property type="project" value="MGI"/>
</dbReference>
<dbReference type="GO" id="GO:0046777">
    <property type="term" value="P:protein autophosphorylation"/>
    <property type="evidence" value="ECO:0000250"/>
    <property type="project" value="UniProtKB"/>
</dbReference>
<dbReference type="GO" id="GO:0030832">
    <property type="term" value="P:regulation of actin filament length"/>
    <property type="evidence" value="ECO:0000315"/>
    <property type="project" value="MGI"/>
</dbReference>
<dbReference type="GO" id="GO:0007605">
    <property type="term" value="P:sensory perception of sound"/>
    <property type="evidence" value="ECO:0000315"/>
    <property type="project" value="UniProtKB"/>
</dbReference>
<dbReference type="GO" id="GO:0007601">
    <property type="term" value="P:visual perception"/>
    <property type="evidence" value="ECO:0007669"/>
    <property type="project" value="UniProtKB-KW"/>
</dbReference>
<dbReference type="CDD" id="cd21956">
    <property type="entry name" value="MBD_Myo3a"/>
    <property type="match status" value="1"/>
</dbReference>
<dbReference type="CDD" id="cd01379">
    <property type="entry name" value="MYSc_Myo3"/>
    <property type="match status" value="1"/>
</dbReference>
<dbReference type="FunFam" id="1.10.510.10:FF:000247">
    <property type="entry name" value="Myosin IIIA"/>
    <property type="match status" value="1"/>
</dbReference>
<dbReference type="FunFam" id="1.20.58.530:FF:000010">
    <property type="entry name" value="Myosin IIIA"/>
    <property type="match status" value="1"/>
</dbReference>
<dbReference type="FunFam" id="3.30.200.20:FF:000456">
    <property type="entry name" value="Myosin IIIA"/>
    <property type="match status" value="1"/>
</dbReference>
<dbReference type="FunFam" id="1.20.5.4820:FF:000005">
    <property type="entry name" value="Myosin IIIB"/>
    <property type="match status" value="1"/>
</dbReference>
<dbReference type="Gene3D" id="1.10.10.820">
    <property type="match status" value="1"/>
</dbReference>
<dbReference type="Gene3D" id="1.20.5.190">
    <property type="match status" value="1"/>
</dbReference>
<dbReference type="Gene3D" id="1.20.58.530">
    <property type="match status" value="1"/>
</dbReference>
<dbReference type="Gene3D" id="6.20.240.20">
    <property type="match status" value="1"/>
</dbReference>
<dbReference type="Gene3D" id="3.40.850.10">
    <property type="entry name" value="Kinesin motor domain"/>
    <property type="match status" value="1"/>
</dbReference>
<dbReference type="Gene3D" id="1.20.120.720">
    <property type="entry name" value="Myosin VI head, motor domain, U50 subdomain"/>
    <property type="match status" value="1"/>
</dbReference>
<dbReference type="Gene3D" id="3.30.200.20">
    <property type="entry name" value="Phosphorylase Kinase, domain 1"/>
    <property type="match status" value="1"/>
</dbReference>
<dbReference type="Gene3D" id="1.10.510.10">
    <property type="entry name" value="Transferase(Phosphotransferase) domain 1"/>
    <property type="match status" value="1"/>
</dbReference>
<dbReference type="InterPro" id="IPR000048">
    <property type="entry name" value="IQ_motif_EF-hand-BS"/>
</dbReference>
<dbReference type="InterPro" id="IPR011009">
    <property type="entry name" value="Kinase-like_dom_sf"/>
</dbReference>
<dbReference type="InterPro" id="IPR036961">
    <property type="entry name" value="Kinesin_motor_dom_sf"/>
</dbReference>
<dbReference type="InterPro" id="IPR052409">
    <property type="entry name" value="Myosin-III_kinase_activity"/>
</dbReference>
<dbReference type="InterPro" id="IPR001609">
    <property type="entry name" value="Myosin_head_motor_dom-like"/>
</dbReference>
<dbReference type="InterPro" id="IPR036083">
    <property type="entry name" value="MYSc_Myo3"/>
</dbReference>
<dbReference type="InterPro" id="IPR027417">
    <property type="entry name" value="P-loop_NTPase"/>
</dbReference>
<dbReference type="InterPro" id="IPR000719">
    <property type="entry name" value="Prot_kinase_dom"/>
</dbReference>
<dbReference type="InterPro" id="IPR017441">
    <property type="entry name" value="Protein_kinase_ATP_BS"/>
</dbReference>
<dbReference type="PANTHER" id="PTHR46256">
    <property type="entry name" value="AGAP011099-PA"/>
    <property type="match status" value="1"/>
</dbReference>
<dbReference type="PANTHER" id="PTHR46256:SF4">
    <property type="entry name" value="MYOSIN-IIIA"/>
    <property type="match status" value="1"/>
</dbReference>
<dbReference type="Pfam" id="PF00612">
    <property type="entry name" value="IQ"/>
    <property type="match status" value="1"/>
</dbReference>
<dbReference type="Pfam" id="PF00063">
    <property type="entry name" value="Myosin_head"/>
    <property type="match status" value="1"/>
</dbReference>
<dbReference type="Pfam" id="PF00069">
    <property type="entry name" value="Pkinase"/>
    <property type="match status" value="1"/>
</dbReference>
<dbReference type="PRINTS" id="PR00193">
    <property type="entry name" value="MYOSINHEAVY"/>
</dbReference>
<dbReference type="SMART" id="SM00015">
    <property type="entry name" value="IQ"/>
    <property type="match status" value="2"/>
</dbReference>
<dbReference type="SMART" id="SM00242">
    <property type="entry name" value="MYSc"/>
    <property type="match status" value="1"/>
</dbReference>
<dbReference type="SMART" id="SM00220">
    <property type="entry name" value="S_TKc"/>
    <property type="match status" value="1"/>
</dbReference>
<dbReference type="SUPFAM" id="SSF52540">
    <property type="entry name" value="P-loop containing nucleoside triphosphate hydrolases"/>
    <property type="match status" value="1"/>
</dbReference>
<dbReference type="SUPFAM" id="SSF56112">
    <property type="entry name" value="Protein kinase-like (PK-like)"/>
    <property type="match status" value="1"/>
</dbReference>
<dbReference type="PROSITE" id="PS50096">
    <property type="entry name" value="IQ"/>
    <property type="match status" value="2"/>
</dbReference>
<dbReference type="PROSITE" id="PS51456">
    <property type="entry name" value="MYOSIN_MOTOR"/>
    <property type="match status" value="1"/>
</dbReference>
<dbReference type="PROSITE" id="PS00107">
    <property type="entry name" value="PROTEIN_KINASE_ATP"/>
    <property type="match status" value="1"/>
</dbReference>
<dbReference type="PROSITE" id="PS50011">
    <property type="entry name" value="PROTEIN_KINASE_DOM"/>
    <property type="match status" value="1"/>
</dbReference>
<proteinExistence type="evidence at protein level"/>
<reference key="1">
    <citation type="journal article" date="2002" name="Proc. Natl. Acad. Sci. U.S.A.">
        <title>From flies' eyes to our ears: mutations in a human class III myosin cause progressive nonsyndromic hearing loss DFNB30.</title>
        <authorList>
            <person name="Walsh T."/>
            <person name="Walsh V."/>
            <person name="Vreugde S."/>
            <person name="Hertzano R."/>
            <person name="Shahin H."/>
            <person name="Haika S."/>
            <person name="Lee M.K."/>
            <person name="Kanaan M."/>
            <person name="King M.-C."/>
            <person name="Avraham K.B."/>
        </authorList>
    </citation>
    <scope>NUCLEOTIDE SEQUENCE [MRNA]</scope>
    <source>
        <strain>C3H/HeJ</strain>
    </source>
</reference>
<reference key="2">
    <citation type="journal article" date="2009" name="Nat. Cell Biol.">
        <title>Myosin IIIa boosts elongation of stereocilia by transporting espin 1 to the plus ends of actin filaments.</title>
        <authorList>
            <person name="Salles F.T."/>
            <person name="Merritt R.C. Jr."/>
            <person name="Manor U."/>
            <person name="Dougherty G.W."/>
            <person name="Sousa A.D."/>
            <person name="Moore J.E."/>
            <person name="Yengo C.M."/>
            <person name="Dose A.C."/>
            <person name="Kachar B."/>
        </authorList>
    </citation>
    <scope>FUNCTION</scope>
</reference>
<reference key="3">
    <citation type="journal article" date="2016" name="J. Cell Biol.">
        <title>Class III myosins shape the auditory hair bundles by limiting microvilli and stereocilia growth.</title>
        <authorList>
            <person name="Lelli A."/>
            <person name="Michel V."/>
            <person name="Boutet de Monvel J."/>
            <person name="Cortese M."/>
            <person name="Bosch-Grau M."/>
            <person name="Aghaie A."/>
            <person name="Perfettini I."/>
            <person name="Dupont T."/>
            <person name="Avan P."/>
            <person name="El-Amraoui A."/>
            <person name="Petit C."/>
        </authorList>
    </citation>
    <scope>FUNCTION</scope>
    <scope>DISRUPTION PHENOTYPE</scope>
    <scope>INTERACTION WITH MORN4</scope>
    <scope>TISSUE SPECIFICITY</scope>
    <scope>SUBCELLULAR LOCATION</scope>
</reference>
<reference key="4">
    <citation type="journal article" date="2016" name="Nat. Commun.">
        <title>Stereocilia-staircase spacing is influenced by myosin III motors and their cargos espin-1 and espin-like.</title>
        <authorList>
            <person name="Ebrahim S."/>
            <person name="Avenarius M.R."/>
            <person name="Grati M."/>
            <person name="Krey J.F."/>
            <person name="Windsor A.M."/>
            <person name="Sousa A.D."/>
            <person name="Ballesteros A."/>
            <person name="Cui R."/>
            <person name="Millis B.A."/>
            <person name="Salles F.T."/>
            <person name="Baird M.A."/>
            <person name="Davidson M.W."/>
            <person name="Jones S.M."/>
            <person name="Choi D."/>
            <person name="Dong L."/>
            <person name="Raval M.H."/>
            <person name="Yengo C.M."/>
            <person name="Barr-Gillespie P.G."/>
            <person name="Kachar B."/>
        </authorList>
    </citation>
    <scope>INTERACTION WITH ESPN AND ESPNL</scope>
</reference>
<gene>
    <name type="primary">Myo3a</name>
</gene>
<name>MYO3A_MOUSE</name>
<sequence>MLPLIGKTIIFDNFPDPSDTWEIIETIGKGTYGKVFKVLNKKSGQKAAVKILDPIHDIDEEIEAEYNILRTLSDHPNVVRFYGIYFKKDKINGDKLWLVLELCNGGSVTDLVKGFLKRGERMSEPVIAYILHEALMGLQHLHSNKTIHRDVKGNNILLTTEGGVKLVDFGVSAQLSSTRHRLNTSVGTPFWMAPEVIACEQQLDTTYDARCDTWSLGITAIELGDGDPPLAELHPMRALFKIPRNPPPKLRQPELWSAEFNDFISKCLTKDYEKRPTVSDLLKHKFITQIEGKDVILQKQLMEFIDIHQCLGSTEKARHERIHTKKGNLNRSLISSLKDVDDLATLDVLDEPTASPHLHPCHSRDQIHIHVADILIALNPFQSLGIYSPKLSRLYIGAKRTANPPHIFAMADLGYQSMVTYNADQCIVISGESGAGKTESAHLLVQQLTVLGKANNRTLQEKILQMNNLVEAFGNACTIINDNSSRFGKYLEMKFTSSGAVVGAQISEYLLEKSRVIHQAMGEKNFHIFYYIYGGLAEKKKLALYKSPEHKPPRYLQNDNLRTVQDMMNNSFYKSQYELIEQCFKVIGFTMEQLASVYSVLAAILNVGNIEFSSVATEYQMDKSYICNHTALENCASLLCIQADELQEALTSHCVVTRGETIIRPNTVEKAADVRDAMAKTLYGRLFSCIVNCINSLLKHDTSPSGDEELNIGILDIFGFENFKRNSFEQLCINIANEQIQYYFNQHVFAWEQNEYLNEDVDARVIEYEDNRPLLDMFLQKPMGLLSLLDEESRFPKATDQTLIEKFEDNLKSQYFWRPKRMELSFGIHHYAGKVLYSASGFLAKNRDTFPTDIVLPLRSSENSVIRQLVNHPLTKTGNLPLSKTKNIVNYQMWNSEKSTNLTKGETRDVTCHACETTNVKTQTVSSYFRYSLMDLLSKMVVGQPHFVRCIKPNNERQARKYDKEKVLLQLRCTGILETARIRRLGYSHRILFANFIKRYYILCYKSSEEPPVSPDTCAAILEKAGLDNWALGKTKVFLKYYHVEQLNLMRKEATNKLVLIQASVRAFLGARRYQELQQKRKSSAVIIQSAARGHLVRKQRKEIVDMKNTAVTTIQTSDQEFDYKKNFENTRESFVKKQTENAVPTNESNTSTPNNKESPSAGKTAPFIAESKATNVESNNRRYHTQKKMSNVYAEGQNQELYIVEDTWAEVSPRQKYVQDLEESRKMRKEEKGDAVIQSYCQWYTEGSNFEESKATCLEGRETWERTSCPGLWLTEEIYLRKTLDPTLSQKSVYQNADGKEKEHKVSVVTQNAPLGNLERDYHLLGFLGEEDTGPVPQAQEEHKAVSIHSKYQSSKKKQQLGKDRLAPPFKNQKILSSSTEVAKTTHNVYPCPTKQEGVHHSKMVDERDSKMASKKEAWDLAMFSRQISKLSEEYFILQKNLNEIILAQQLKPFYLGIYRHKPINRHVSTHQYLSGVSKGEEPKILRPPRRPRKPKTLNNPEDSTYYYLLHKSTQEEKRRPGKDSQGKLLGLEDFYYKEFLPTHYGPKAHSSNAREWKALKEPQAQPIESNERCWTTSENESLEEERISANPYDYRRLLRKTSQRQRLVQQL</sequence>
<comment type="function">
    <text evidence="1 6 7">Actin-dependent motor protein with a protein kinase activity, playing an essential role in hearing (PubMed:26754646). Probably plays also a role in vision (By similarity). Required for normal cochlear hair bundle development and hearing. Plays an important role in the early steps of cochlear hair bundle morphogenesis. Influences the number and lengths of stereocilia to be produced and limits the growth of microvilli within the forming auditory hair bundles thereby contributing to the architecture of the hair bundle, including its staircase pattern (PubMed:26754646). Involved in the elongation of actin in stereocilia tips by transporting the actin regulatory factor ESPN to the plus ends of actin filaments (PubMed:19287378).</text>
</comment>
<comment type="catalytic activity">
    <reaction>
        <text>L-seryl-[protein] + ATP = O-phospho-L-seryl-[protein] + ADP + H(+)</text>
        <dbReference type="Rhea" id="RHEA:17989"/>
        <dbReference type="Rhea" id="RHEA-COMP:9863"/>
        <dbReference type="Rhea" id="RHEA-COMP:11604"/>
        <dbReference type="ChEBI" id="CHEBI:15378"/>
        <dbReference type="ChEBI" id="CHEBI:29999"/>
        <dbReference type="ChEBI" id="CHEBI:30616"/>
        <dbReference type="ChEBI" id="CHEBI:83421"/>
        <dbReference type="ChEBI" id="CHEBI:456216"/>
        <dbReference type="EC" id="2.7.11.1"/>
    </reaction>
</comment>
<comment type="catalytic activity">
    <reaction>
        <text>L-threonyl-[protein] + ATP = O-phospho-L-threonyl-[protein] + ADP + H(+)</text>
        <dbReference type="Rhea" id="RHEA:46608"/>
        <dbReference type="Rhea" id="RHEA-COMP:11060"/>
        <dbReference type="Rhea" id="RHEA-COMP:11605"/>
        <dbReference type="ChEBI" id="CHEBI:15378"/>
        <dbReference type="ChEBI" id="CHEBI:30013"/>
        <dbReference type="ChEBI" id="CHEBI:30616"/>
        <dbReference type="ChEBI" id="CHEBI:61977"/>
        <dbReference type="ChEBI" id="CHEBI:456216"/>
        <dbReference type="EC" id="2.7.11.1"/>
    </reaction>
</comment>
<comment type="catalytic activity">
    <reaction evidence="1">
        <text>ATP + H2O = ADP + phosphate + H(+)</text>
        <dbReference type="Rhea" id="RHEA:13065"/>
        <dbReference type="ChEBI" id="CHEBI:15377"/>
        <dbReference type="ChEBI" id="CHEBI:15378"/>
        <dbReference type="ChEBI" id="CHEBI:30616"/>
        <dbReference type="ChEBI" id="CHEBI:43474"/>
        <dbReference type="ChEBI" id="CHEBI:456216"/>
    </reaction>
</comment>
<comment type="subunit">
    <text evidence="7 8">Interacts with MORN4 (PubMed:26754646). Interacts (via C-terminus) with ESPN and ESPNL (PubMed:26926603).</text>
</comment>
<comment type="subcellular location">
    <subcellularLocation>
        <location>Cytoplasm</location>
        <location>Cytoskeleton</location>
    </subcellularLocation>
    <subcellularLocation>
        <location evidence="7">Cytoplasm</location>
    </subcellularLocation>
    <subcellularLocation>
        <location evidence="1">Cell projection</location>
        <location evidence="1">Filopodium tip</location>
    </subcellularLocation>
    <subcellularLocation>
        <location evidence="7">Cell projection</location>
        <location evidence="7">Stereocilium</location>
    </subcellularLocation>
    <text evidence="1">Increased localization at the filodium tip seen in the presence of MORN4.</text>
</comment>
<comment type="tissue specificity">
    <text evidence="7 8">Expressed in the cochlear hair cells (at protein level) (PubMed:26754646). Expressed in utricle hair bundles (at protein level) (PubMed:26926603).</text>
</comment>
<comment type="disruption phenotype">
    <text evidence="7">MYO3A single knockout mice do not exhibit early hearing impairment whereas mice with a double knockout of MYO3A and MYO3B are profoundly deaf at 1 month of age. Cochlear hair bundles have abnormally long stereocilia and show dynamic shape defects during development.</text>
</comment>
<comment type="similarity">
    <text evidence="9">In the C-terminal section; belongs to the TRAFAC class myosin-kinesin ATPase superfamily. Myosin family.</text>
</comment>
<comment type="similarity">
    <text evidence="9">In the N-terminal section; belongs to the protein kinase superfamily. STE Ser/Thr protein kinase family.</text>
</comment>
<accession>Q8K3H5</accession>
<organism>
    <name type="scientific">Mus musculus</name>
    <name type="common">Mouse</name>
    <dbReference type="NCBI Taxonomy" id="10090"/>
    <lineage>
        <taxon>Eukaryota</taxon>
        <taxon>Metazoa</taxon>
        <taxon>Chordata</taxon>
        <taxon>Craniata</taxon>
        <taxon>Vertebrata</taxon>
        <taxon>Euteleostomi</taxon>
        <taxon>Mammalia</taxon>
        <taxon>Eutheria</taxon>
        <taxon>Euarchontoglires</taxon>
        <taxon>Glires</taxon>
        <taxon>Rodentia</taxon>
        <taxon>Myomorpha</taxon>
        <taxon>Muroidea</taxon>
        <taxon>Muridae</taxon>
        <taxon>Murinae</taxon>
        <taxon>Mus</taxon>
        <taxon>Mus</taxon>
    </lineage>
</organism>